<reference key="1">
    <citation type="journal article" date="2008" name="PLoS ONE">
        <title>A recalibrated molecular clock and independent origins for the cholera pandemic clones.</title>
        <authorList>
            <person name="Feng L."/>
            <person name="Reeves P.R."/>
            <person name="Lan R."/>
            <person name="Ren Y."/>
            <person name="Gao C."/>
            <person name="Zhou Z."/>
            <person name="Ren Y."/>
            <person name="Cheng J."/>
            <person name="Wang W."/>
            <person name="Wang J."/>
            <person name="Qian W."/>
            <person name="Li D."/>
            <person name="Wang L."/>
        </authorList>
    </citation>
    <scope>NUCLEOTIDE SEQUENCE [LARGE SCALE GENOMIC DNA]</scope>
    <source>
        <strain>M66-2</strain>
    </source>
</reference>
<protein>
    <recommendedName>
        <fullName evidence="1">Ribosome rescue factor SmrB</fullName>
        <ecNumber evidence="1">3.1.-.-</ecNumber>
    </recommendedName>
</protein>
<comment type="function">
    <text evidence="1">Acts as a ribosome collision sensor. Detects stalled/collided disomes (pairs of ribosomes where the leading ribosome is stalled and a second ribosome has collided with it) and endonucleolytically cleaves mRNA at the 5' boundary of the stalled ribosome. Stalled/collided disomes form a new interface (primarily via the 30S subunits) that binds SmrB. Cleaved mRNA becomes available for tmRNA ligation, leading to ribosomal subunit dissociation and rescue of stalled ribosomes.</text>
</comment>
<comment type="subunit">
    <text evidence="1">Associates with collided ribosomes, but not with correctly translating polysomes.</text>
</comment>
<comment type="similarity">
    <text evidence="1">Belongs to the SmrB family.</text>
</comment>
<gene>
    <name evidence="1" type="primary">smrB</name>
    <name type="ordered locus">VCM66_2042</name>
</gene>
<proteinExistence type="inferred from homology"/>
<keyword id="KW-0255">Endonuclease</keyword>
<keyword id="KW-0378">Hydrolase</keyword>
<keyword id="KW-0540">Nuclease</keyword>
<keyword id="KW-0694">RNA-binding</keyword>
<keyword id="KW-0699">rRNA-binding</keyword>
<dbReference type="EC" id="3.1.-.-" evidence="1"/>
<dbReference type="EMBL" id="CP001233">
    <property type="protein sequence ID" value="ACP06344.1"/>
    <property type="molecule type" value="Genomic_DNA"/>
</dbReference>
<dbReference type="RefSeq" id="WP_000041521.1">
    <property type="nucleotide sequence ID" value="NC_012578.1"/>
</dbReference>
<dbReference type="SMR" id="C3LP68"/>
<dbReference type="KEGG" id="vcm:VCM66_2042"/>
<dbReference type="HOGENOM" id="CLU_055978_4_0_6"/>
<dbReference type="Proteomes" id="UP000001217">
    <property type="component" value="Chromosome I"/>
</dbReference>
<dbReference type="GO" id="GO:0004521">
    <property type="term" value="F:RNA endonuclease activity"/>
    <property type="evidence" value="ECO:0007669"/>
    <property type="project" value="UniProtKB-UniRule"/>
</dbReference>
<dbReference type="GO" id="GO:0019843">
    <property type="term" value="F:rRNA binding"/>
    <property type="evidence" value="ECO:0007669"/>
    <property type="project" value="UniProtKB-UniRule"/>
</dbReference>
<dbReference type="GO" id="GO:0072344">
    <property type="term" value="P:rescue of stalled ribosome"/>
    <property type="evidence" value="ECO:0007669"/>
    <property type="project" value="UniProtKB-UniRule"/>
</dbReference>
<dbReference type="Gene3D" id="3.30.1370.110">
    <property type="match status" value="1"/>
</dbReference>
<dbReference type="HAMAP" id="MF_01042">
    <property type="entry name" value="SmrB"/>
    <property type="match status" value="1"/>
</dbReference>
<dbReference type="InterPro" id="IPR002625">
    <property type="entry name" value="Smr_dom"/>
</dbReference>
<dbReference type="InterPro" id="IPR036063">
    <property type="entry name" value="Smr_dom_sf"/>
</dbReference>
<dbReference type="InterPro" id="IPR022990">
    <property type="entry name" value="SmrB-like"/>
</dbReference>
<dbReference type="NCBIfam" id="NF003432">
    <property type="entry name" value="PRK04946.1"/>
    <property type="match status" value="1"/>
</dbReference>
<dbReference type="PANTHER" id="PTHR35562">
    <property type="entry name" value="DNA ENDONUCLEASE SMRA-RELATED"/>
    <property type="match status" value="1"/>
</dbReference>
<dbReference type="PANTHER" id="PTHR35562:SF1">
    <property type="entry name" value="UPF0115 PROTEIN YFCN"/>
    <property type="match status" value="1"/>
</dbReference>
<dbReference type="Pfam" id="PF01713">
    <property type="entry name" value="Smr"/>
    <property type="match status" value="1"/>
</dbReference>
<dbReference type="SMART" id="SM00463">
    <property type="entry name" value="SMR"/>
    <property type="match status" value="1"/>
</dbReference>
<dbReference type="SUPFAM" id="SSF160443">
    <property type="entry name" value="SMR domain-like"/>
    <property type="match status" value="1"/>
</dbReference>
<dbReference type="PROSITE" id="PS50828">
    <property type="entry name" value="SMR"/>
    <property type="match status" value="1"/>
</dbReference>
<accession>C3LP68</accession>
<feature type="chain" id="PRO_1000149559" description="Ribosome rescue factor SmrB">
    <location>
        <begin position="1"/>
        <end position="186"/>
    </location>
</feature>
<feature type="domain" description="Smr" evidence="1">
    <location>
        <begin position="107"/>
        <end position="182"/>
    </location>
</feature>
<feature type="region of interest" description="Disordered" evidence="2">
    <location>
        <begin position="1"/>
        <end position="20"/>
    </location>
</feature>
<feature type="region of interest" description="Disordered" evidence="2">
    <location>
        <begin position="41"/>
        <end position="60"/>
    </location>
</feature>
<feature type="compositionally biased region" description="Basic and acidic residues" evidence="2">
    <location>
        <begin position="1"/>
        <end position="16"/>
    </location>
</feature>
<feature type="compositionally biased region" description="Basic and acidic residues" evidence="2">
    <location>
        <begin position="49"/>
        <end position="60"/>
    </location>
</feature>
<evidence type="ECO:0000255" key="1">
    <source>
        <dbReference type="HAMAP-Rule" id="MF_01042"/>
    </source>
</evidence>
<evidence type="ECO:0000256" key="2">
    <source>
        <dbReference type="SAM" id="MobiDB-lite"/>
    </source>
</evidence>
<name>SMRB_VIBCM</name>
<sequence>MSKNDHRITHNKSDKDNLDDDFSLFRDEVKGVKKLRQDTILHAPNRNPKQKEIRRTEREASDNDFYFSDEFMPHLTDEGPTRYARSDVSKYEVKRLRRGVYVPDVFLDMHGMTQQEAKRELGAMIAYCLKENVHCACVQHGIGKHILKQNVPLWLAQHPDVLAFHQAPLEFGGDGALLVLLSIPEK</sequence>
<organism>
    <name type="scientific">Vibrio cholerae serotype O1 (strain M66-2)</name>
    <dbReference type="NCBI Taxonomy" id="579112"/>
    <lineage>
        <taxon>Bacteria</taxon>
        <taxon>Pseudomonadati</taxon>
        <taxon>Pseudomonadota</taxon>
        <taxon>Gammaproteobacteria</taxon>
        <taxon>Vibrionales</taxon>
        <taxon>Vibrionaceae</taxon>
        <taxon>Vibrio</taxon>
    </lineage>
</organism>